<feature type="chain" id="PRO_0000117896" description="NADH-ubiquinone oxidoreductase chain 4">
    <location>
        <begin position="1" status="less than"/>
        <end position="231" status="greater than"/>
    </location>
</feature>
<feature type="transmembrane region" description="Helical" evidence="2">
    <location>
        <begin position="1"/>
        <end position="21"/>
    </location>
</feature>
<feature type="transmembrane region" description="Helical" evidence="2">
    <location>
        <begin position="34"/>
        <end position="54"/>
    </location>
</feature>
<feature type="transmembrane region" description="Helical" evidence="2">
    <location>
        <begin position="61"/>
        <end position="80"/>
    </location>
</feature>
<feature type="transmembrane region" description="Helical" evidence="2">
    <location>
        <begin position="84"/>
        <end position="106"/>
    </location>
</feature>
<feature type="transmembrane region" description="Helical" evidence="2">
    <location>
        <begin position="128"/>
        <end position="148"/>
    </location>
</feature>
<feature type="transmembrane region" description="Helical" evidence="2">
    <location>
        <begin position="169"/>
        <end position="189"/>
    </location>
</feature>
<feature type="non-terminal residue">
    <location>
        <position position="1"/>
    </location>
</feature>
<feature type="non-terminal residue">
    <location>
        <position position="231"/>
    </location>
</feature>
<keyword id="KW-0249">Electron transport</keyword>
<keyword id="KW-0472">Membrane</keyword>
<keyword id="KW-0496">Mitochondrion</keyword>
<keyword id="KW-0520">NAD</keyword>
<keyword id="KW-0679">Respiratory chain</keyword>
<keyword id="KW-1278">Translocase</keyword>
<keyword id="KW-0812">Transmembrane</keyword>
<keyword id="KW-1133">Transmembrane helix</keyword>
<keyword id="KW-0813">Transport</keyword>
<keyword id="KW-0830">Ubiquinone</keyword>
<organism>
    <name type="scientific">Metlapilcoatlus nummifer</name>
    <name type="common">Mexican jumping pitviper</name>
    <name type="synonym">Atropoides nummifer</name>
    <dbReference type="NCBI Taxonomy" id="3148373"/>
    <lineage>
        <taxon>Eukaryota</taxon>
        <taxon>Metazoa</taxon>
        <taxon>Chordata</taxon>
        <taxon>Craniata</taxon>
        <taxon>Vertebrata</taxon>
        <taxon>Euteleostomi</taxon>
        <taxon>Lepidosauria</taxon>
        <taxon>Squamata</taxon>
        <taxon>Bifurcata</taxon>
        <taxon>Unidentata</taxon>
        <taxon>Episquamata</taxon>
        <taxon>Toxicofera</taxon>
        <taxon>Serpentes</taxon>
        <taxon>Colubroidea</taxon>
        <taxon>Viperidae</taxon>
        <taxon>Crotalinae</taxon>
        <taxon>Metlapilcoatlus</taxon>
    </lineage>
</organism>
<reference key="1">
    <citation type="journal article" date="1996" name="Copeia">
        <title>Crotaline intergeneric relationships based on mitochondrial DNA sequence data.</title>
        <authorList>
            <person name="Kraus F."/>
            <person name="Mink D.G."/>
            <person name="Brown W.M."/>
        </authorList>
    </citation>
    <scope>NUCLEOTIDE SEQUENCE [GENOMIC DNA]</scope>
</reference>
<dbReference type="EC" id="7.1.1.2"/>
<dbReference type="EMBL" id="U41871">
    <property type="protein sequence ID" value="AAB46629.1"/>
    <property type="molecule type" value="Genomic_DNA"/>
</dbReference>
<dbReference type="SMR" id="O03692"/>
<dbReference type="GO" id="GO:0031966">
    <property type="term" value="C:mitochondrial membrane"/>
    <property type="evidence" value="ECO:0007669"/>
    <property type="project" value="UniProtKB-SubCell"/>
</dbReference>
<dbReference type="GO" id="GO:0008137">
    <property type="term" value="F:NADH dehydrogenase (ubiquinone) activity"/>
    <property type="evidence" value="ECO:0007669"/>
    <property type="project" value="UniProtKB-EC"/>
</dbReference>
<dbReference type="GO" id="GO:0048039">
    <property type="term" value="F:ubiquinone binding"/>
    <property type="evidence" value="ECO:0007669"/>
    <property type="project" value="TreeGrafter"/>
</dbReference>
<dbReference type="GO" id="GO:0042773">
    <property type="term" value="P:ATP synthesis coupled electron transport"/>
    <property type="evidence" value="ECO:0007669"/>
    <property type="project" value="InterPro"/>
</dbReference>
<dbReference type="GO" id="GO:0015990">
    <property type="term" value="P:electron transport coupled proton transport"/>
    <property type="evidence" value="ECO:0007669"/>
    <property type="project" value="TreeGrafter"/>
</dbReference>
<dbReference type="InterPro" id="IPR003918">
    <property type="entry name" value="NADH_UbQ_OxRdtase"/>
</dbReference>
<dbReference type="InterPro" id="IPR001750">
    <property type="entry name" value="ND/Mrp_TM"/>
</dbReference>
<dbReference type="PANTHER" id="PTHR43507">
    <property type="entry name" value="NADH-UBIQUINONE OXIDOREDUCTASE CHAIN 4"/>
    <property type="match status" value="1"/>
</dbReference>
<dbReference type="PANTHER" id="PTHR43507:SF20">
    <property type="entry name" value="NADH-UBIQUINONE OXIDOREDUCTASE CHAIN 4"/>
    <property type="match status" value="1"/>
</dbReference>
<dbReference type="Pfam" id="PF00361">
    <property type="entry name" value="Proton_antipo_M"/>
    <property type="match status" value="1"/>
</dbReference>
<comment type="function">
    <text evidence="1">Core subunit of the mitochondrial membrane respiratory chain NADH dehydrogenase (Complex I) that is believed to belong to the minimal assembly required for catalysis. Complex I functions in the transfer of electrons from NADH to the respiratory chain. The immediate electron acceptor for the enzyme is believed to be ubiquinone (By similarity).</text>
</comment>
<comment type="catalytic activity">
    <reaction>
        <text>a ubiquinone + NADH + 5 H(+)(in) = a ubiquinol + NAD(+) + 4 H(+)(out)</text>
        <dbReference type="Rhea" id="RHEA:29091"/>
        <dbReference type="Rhea" id="RHEA-COMP:9565"/>
        <dbReference type="Rhea" id="RHEA-COMP:9566"/>
        <dbReference type="ChEBI" id="CHEBI:15378"/>
        <dbReference type="ChEBI" id="CHEBI:16389"/>
        <dbReference type="ChEBI" id="CHEBI:17976"/>
        <dbReference type="ChEBI" id="CHEBI:57540"/>
        <dbReference type="ChEBI" id="CHEBI:57945"/>
        <dbReference type="EC" id="7.1.1.2"/>
    </reaction>
</comment>
<comment type="subcellular location">
    <subcellularLocation>
        <location evidence="1">Mitochondrion membrane</location>
        <topology evidence="1">Multi-pass membrane protein</topology>
    </subcellularLocation>
</comment>
<comment type="similarity">
    <text evidence="3">Belongs to the complex I subunit 4 family.</text>
</comment>
<accession>O03692</accession>
<sequence>PIAGSMVLAAILLKLGGYGIIRMMQILPTTKTDLFLPFIVLALWGAILANLTCLQQTDLKSLIAYSSISHMGLVVAAIIIQSPWGLSGAMALMIAHGFTSSALFCLANTTYERTHTRILILTRGFHNILPMATTWWLLANLMNIATPPTLNFTSELLIMSTLFNWCPTTIILLGLSMLITASYSLHMFLSSQMGPTPLNNQTEPTHSREHLLMTLHLAPLMMISMKPELII</sequence>
<geneLocation type="mitochondrion"/>
<proteinExistence type="inferred from homology"/>
<evidence type="ECO:0000250" key="1"/>
<evidence type="ECO:0000255" key="2"/>
<evidence type="ECO:0000305" key="3"/>
<gene>
    <name type="primary">MT-ND4</name>
    <name type="synonym">MTND4</name>
    <name type="synonym">NADH4</name>
    <name type="synonym">ND4</name>
</gene>
<protein>
    <recommendedName>
        <fullName>NADH-ubiquinone oxidoreductase chain 4</fullName>
        <ecNumber>7.1.1.2</ecNumber>
    </recommendedName>
    <alternativeName>
        <fullName>NADH dehydrogenase subunit 4</fullName>
    </alternativeName>
</protein>
<name>NU4M_METNM</name>